<sequence length="241" mass="27472">MSSWVEVSLNTPAQLSLPLYLPDDETFASFWPGDNASLLAALQNVLRQEHSGYIYLWAREGAGRSHLLHAACAELSQRGDAVGYVPLDKRTWFVPEVLDGMEHLSLVCIDNIECVAGDELWEMAIFDLYNRILESGKTRLLITGDRPPRQLNLGLPDLASRLDWGQIYKLQPLSDEDKLQALQLRARLRGFELPEDVGRFLLKRLDREMRTLFMTLDQLDHASITAQRKLTIPFVKEILKL</sequence>
<name>HDA_SALPB</name>
<keyword id="KW-0235">DNA replication</keyword>
<keyword id="KW-0236">DNA replication inhibitor</keyword>
<evidence type="ECO:0000250" key="1"/>
<evidence type="ECO:0000255" key="2">
    <source>
        <dbReference type="HAMAP-Rule" id="MF_01158"/>
    </source>
</evidence>
<evidence type="ECO:0000305" key="3"/>
<comment type="function">
    <text evidence="1">Mediates the interaction of DNA replication initiator protein DnaA with DNA polymerase subunit beta sliding clamp (dnaN). Stimulates hydrolysis of ATP-DnaA to ADP-DnaA, rendering DnaA inactive for reinitiation, a process called regulatory inhibition of DnaA or RIDA (By similarity).</text>
</comment>
<comment type="subunit">
    <text evidence="2">The active form seems to be an ADP-bound monomer. Forms the RIDA complex (regulatory inactivation of DnaA) of ATP-DnaA, ADP-Hda and the DNA-loaded beta sliding clamp (dnaN).</text>
</comment>
<comment type="similarity">
    <text evidence="2">Belongs to the DnaA family. HdA subfamily.</text>
</comment>
<comment type="sequence caution" evidence="3">
    <conflict type="erroneous initiation">
        <sequence resource="EMBL-CDS" id="ABX65883"/>
    </conflict>
</comment>
<gene>
    <name evidence="2" type="primary">hda</name>
    <name type="ordered locus">SPAB_00450</name>
</gene>
<reference key="1">
    <citation type="submission" date="2007-11" db="EMBL/GenBank/DDBJ databases">
        <authorList>
            <consortium name="The Salmonella enterica serovar Paratyphi B Genome Sequencing Project"/>
            <person name="McClelland M."/>
            <person name="Sanderson E.K."/>
            <person name="Porwollik S."/>
            <person name="Spieth J."/>
            <person name="Clifton W.S."/>
            <person name="Fulton R."/>
            <person name="Cordes M."/>
            <person name="Wollam A."/>
            <person name="Shah N."/>
            <person name="Pepin K."/>
            <person name="Bhonagiri V."/>
            <person name="Nash W."/>
            <person name="Johnson M."/>
            <person name="Thiruvilangam P."/>
            <person name="Wilson R."/>
        </authorList>
    </citation>
    <scope>NUCLEOTIDE SEQUENCE [LARGE SCALE GENOMIC DNA]</scope>
    <source>
        <strain>ATCC BAA-1250 / SPB7</strain>
    </source>
</reference>
<proteinExistence type="inferred from homology"/>
<accession>A9N2Y3</accession>
<feature type="chain" id="PRO_0000389451" description="DnaA regulatory inactivator Hda">
    <location>
        <begin position="1"/>
        <end position="241"/>
    </location>
</feature>
<protein>
    <recommendedName>
        <fullName evidence="2">DnaA regulatory inactivator Hda</fullName>
    </recommendedName>
</protein>
<organism>
    <name type="scientific">Salmonella paratyphi B (strain ATCC BAA-1250 / SPB7)</name>
    <dbReference type="NCBI Taxonomy" id="1016998"/>
    <lineage>
        <taxon>Bacteria</taxon>
        <taxon>Pseudomonadati</taxon>
        <taxon>Pseudomonadota</taxon>
        <taxon>Gammaproteobacteria</taxon>
        <taxon>Enterobacterales</taxon>
        <taxon>Enterobacteriaceae</taxon>
        <taxon>Salmonella</taxon>
    </lineage>
</organism>
<dbReference type="EMBL" id="CP000886">
    <property type="protein sequence ID" value="ABX65883.1"/>
    <property type="status" value="ALT_INIT"/>
    <property type="molecule type" value="Genomic_DNA"/>
</dbReference>
<dbReference type="SMR" id="A9N2Y3"/>
<dbReference type="KEGG" id="spq:SPAB_00450"/>
<dbReference type="PATRIC" id="fig|1016998.12.peg.424"/>
<dbReference type="HOGENOM" id="CLU_072265_1_1_6"/>
<dbReference type="BioCyc" id="SENT1016998:SPAB_RS01825-MONOMER"/>
<dbReference type="Proteomes" id="UP000008556">
    <property type="component" value="Chromosome"/>
</dbReference>
<dbReference type="GO" id="GO:0006270">
    <property type="term" value="P:DNA replication initiation"/>
    <property type="evidence" value="ECO:0007669"/>
    <property type="project" value="TreeGrafter"/>
</dbReference>
<dbReference type="GO" id="GO:0032297">
    <property type="term" value="P:negative regulation of DNA-templated DNA replication initiation"/>
    <property type="evidence" value="ECO:0007669"/>
    <property type="project" value="InterPro"/>
</dbReference>
<dbReference type="FunFam" id="1.10.8.60:FF:000024">
    <property type="entry name" value="DnaA regulatory inactivator Hda"/>
    <property type="match status" value="1"/>
</dbReference>
<dbReference type="FunFam" id="3.40.50.300:FF:000452">
    <property type="entry name" value="DnaA regulatory inactivator Hda"/>
    <property type="match status" value="1"/>
</dbReference>
<dbReference type="Gene3D" id="1.10.8.60">
    <property type="match status" value="1"/>
</dbReference>
<dbReference type="Gene3D" id="3.40.50.300">
    <property type="entry name" value="P-loop containing nucleotide triphosphate hydrolases"/>
    <property type="match status" value="1"/>
</dbReference>
<dbReference type="HAMAP" id="MF_01158">
    <property type="entry name" value="Hda"/>
    <property type="match status" value="1"/>
</dbReference>
<dbReference type="InterPro" id="IPR020591">
    <property type="entry name" value="Chromosome_initiator_DnaA-like"/>
</dbReference>
<dbReference type="InterPro" id="IPR013317">
    <property type="entry name" value="DnaA_dom"/>
</dbReference>
<dbReference type="InterPro" id="IPR017788">
    <property type="entry name" value="Hda"/>
</dbReference>
<dbReference type="InterPro" id="IPR022864">
    <property type="entry name" value="Hda_Enterobact"/>
</dbReference>
<dbReference type="InterPro" id="IPR055199">
    <property type="entry name" value="Hda_lid"/>
</dbReference>
<dbReference type="InterPro" id="IPR027417">
    <property type="entry name" value="P-loop_NTPase"/>
</dbReference>
<dbReference type="NCBIfam" id="TIGR03420">
    <property type="entry name" value="DnaA_homol_Hda"/>
    <property type="match status" value="1"/>
</dbReference>
<dbReference type="NCBIfam" id="NF005982">
    <property type="entry name" value="PRK08084.1"/>
    <property type="match status" value="1"/>
</dbReference>
<dbReference type="PANTHER" id="PTHR30050">
    <property type="entry name" value="CHROMOSOMAL REPLICATION INITIATOR PROTEIN DNAA"/>
    <property type="match status" value="1"/>
</dbReference>
<dbReference type="PANTHER" id="PTHR30050:SF5">
    <property type="entry name" value="DNAA REGULATORY INACTIVATOR HDA"/>
    <property type="match status" value="1"/>
</dbReference>
<dbReference type="Pfam" id="PF00308">
    <property type="entry name" value="Bac_DnaA"/>
    <property type="match status" value="1"/>
</dbReference>
<dbReference type="Pfam" id="PF22688">
    <property type="entry name" value="Hda_lid"/>
    <property type="match status" value="1"/>
</dbReference>
<dbReference type="PRINTS" id="PR00051">
    <property type="entry name" value="DNAA"/>
</dbReference>
<dbReference type="SUPFAM" id="SSF52540">
    <property type="entry name" value="P-loop containing nucleoside triphosphate hydrolases"/>
    <property type="match status" value="1"/>
</dbReference>